<comment type="function">
    <text evidence="6 7">Component of a cell-surface receptor complex that mediates cell-cell interactions between muscle precursor cells. Promotes differentiation of myogenic cells. Required for response to NTN3 and activation of NFATC3.</text>
</comment>
<comment type="subunit">
    <text evidence="1">Part of a complex that contains BOC, CDON, NEO1, cadherins and CTNNB1. Interacts with NTN3. Interacts with DHH, IHH and SHH (By similarity).</text>
</comment>
<comment type="interaction">
    <interactant intactId="EBI-7017034">
        <id>Q32MD9</id>
    </interactant>
    <interactant intactId="EBI-914519">
        <id>P00520</id>
        <label>Abl1</label>
    </interactant>
    <organismsDiffer>false</organismsDiffer>
    <experiments>2</experiments>
</comment>
<comment type="interaction">
    <interactant intactId="EBI-7017034">
        <id>Q32MD9</id>
    </interactant>
    <interactant intactId="EBI-15729104">
        <id>Q01721</id>
        <label>Gas1</label>
    </interactant>
    <organismsDiffer>false</organismsDiffer>
    <experiments>3</experiments>
</comment>
<comment type="subcellular location">
    <subcellularLocation>
        <location evidence="1">Cell membrane</location>
        <topology evidence="1">Single-pass membrane protein</topology>
    </subcellularLocation>
</comment>
<comment type="tissue specificity">
    <text evidence="7">Highly expressed in somites and the dorsal lips of the neural tube during embryogenesis. Detected at very low levels in adult tissues.</text>
</comment>
<comment type="induction">
    <text evidence="7">Transiently up-regulated during myoblast differentiation.</text>
</comment>
<comment type="PTM">
    <text evidence="1">N-glycosylated.</text>
</comment>
<accession>Q32MD9</accession>
<accession>E9QKV9</accession>
<accession>O88971</accession>
<feature type="signal peptide" evidence="2">
    <location>
        <begin position="1"/>
        <end position="24"/>
    </location>
</feature>
<feature type="chain" id="PRO_0000234055" description="Cell adhesion molecule-related/down-regulated by oncogenes">
    <location>
        <begin position="25"/>
        <end position="1250"/>
    </location>
</feature>
<feature type="topological domain" description="Extracellular" evidence="2">
    <location>
        <begin position="25"/>
        <end position="962"/>
    </location>
</feature>
<feature type="transmembrane region" description="Helical" evidence="2">
    <location>
        <begin position="963"/>
        <end position="983"/>
    </location>
</feature>
<feature type="topological domain" description="Cytoplasmic" evidence="2">
    <location>
        <begin position="984"/>
        <end position="1250"/>
    </location>
</feature>
<feature type="domain" description="Ig-like C2-type 1">
    <location>
        <begin position="28"/>
        <end position="113"/>
    </location>
</feature>
<feature type="domain" description="Ig-like C2-type 2">
    <location>
        <begin position="119"/>
        <end position="203"/>
    </location>
</feature>
<feature type="domain" description="Ig-like C2-type 3">
    <location>
        <begin position="224"/>
        <end position="302"/>
    </location>
</feature>
<feature type="domain" description="Ig-like C2-type 4">
    <location>
        <begin position="309"/>
        <end position="395"/>
    </location>
</feature>
<feature type="domain" description="Ig-like C2-type 5">
    <location>
        <begin position="404"/>
        <end position="515"/>
    </location>
</feature>
<feature type="domain" description="Fibronectin type-III 1" evidence="4">
    <location>
        <begin position="572"/>
        <end position="673"/>
    </location>
</feature>
<feature type="domain" description="Fibronectin type-III 2" evidence="4">
    <location>
        <begin position="719"/>
        <end position="814"/>
    </location>
</feature>
<feature type="domain" description="Fibronectin type-III 3" evidence="4">
    <location>
        <begin position="822"/>
        <end position="922"/>
    </location>
</feature>
<feature type="region of interest" description="Disordered" evidence="5">
    <location>
        <begin position="524"/>
        <end position="547"/>
    </location>
</feature>
<feature type="region of interest" description="Disordered" evidence="5">
    <location>
        <begin position="929"/>
        <end position="951"/>
    </location>
</feature>
<feature type="region of interest" description="Disordered" evidence="5">
    <location>
        <begin position="1178"/>
        <end position="1208"/>
    </location>
</feature>
<feature type="region of interest" description="Disordered" evidence="5">
    <location>
        <begin position="1223"/>
        <end position="1250"/>
    </location>
</feature>
<feature type="compositionally biased region" description="Polar residues" evidence="5">
    <location>
        <begin position="524"/>
        <end position="534"/>
    </location>
</feature>
<feature type="compositionally biased region" description="Basic and acidic residues" evidence="5">
    <location>
        <begin position="1193"/>
        <end position="1208"/>
    </location>
</feature>
<feature type="glycosylation site" description="N-linked (GlcNAc...) asparagine" evidence="2">
    <location>
        <position position="99"/>
    </location>
</feature>
<feature type="glycosylation site" description="N-linked (GlcNAc...) asparagine" evidence="2">
    <location>
        <position position="179"/>
    </location>
</feature>
<feature type="glycosylation site" description="N-linked (GlcNAc...) asparagine" evidence="2">
    <location>
        <position position="286"/>
    </location>
</feature>
<feature type="glycosylation site" description="N-linked (GlcNAc...) asparagine" evidence="2">
    <location>
        <position position="293"/>
    </location>
</feature>
<feature type="glycosylation site" description="N-linked (GlcNAc...) asparagine" evidence="2">
    <location>
        <position position="341"/>
    </location>
</feature>
<feature type="glycosylation site" description="N-linked (GlcNAc...) asparagine" evidence="2">
    <location>
        <position position="426"/>
    </location>
</feature>
<feature type="glycosylation site" description="N-linked (GlcNAc...) asparagine" evidence="2">
    <location>
        <position position="569"/>
    </location>
</feature>
<feature type="glycosylation site" description="N-linked (GlcNAc...) asparagine" evidence="2">
    <location>
        <position position="869"/>
    </location>
</feature>
<feature type="disulfide bond" evidence="3">
    <location>
        <begin position="49"/>
        <end position="96"/>
    </location>
</feature>
<feature type="disulfide bond" evidence="3">
    <location>
        <begin position="140"/>
        <end position="190"/>
    </location>
</feature>
<feature type="disulfide bond" evidence="3">
    <location>
        <begin position="242"/>
        <end position="289"/>
    </location>
</feature>
<feature type="disulfide bond" evidence="3">
    <location>
        <begin position="332"/>
        <end position="379"/>
    </location>
</feature>
<feature type="disulfide bond" evidence="3">
    <location>
        <begin position="425"/>
        <end position="499"/>
    </location>
</feature>
<feature type="sequence conflict" description="In Ref. 1; AAC43031 and 3; AAI09177." evidence="8" ref="1 3">
    <original>R</original>
    <variation>G</variation>
    <location>
        <position position="368"/>
    </location>
</feature>
<feature type="sequence conflict" description="In Ref. 1; AAC43031." evidence="8" ref="1">
    <original>A</original>
    <variation>P</variation>
    <location>
        <position position="381"/>
    </location>
</feature>
<feature type="sequence conflict" description="In Ref. 3; AAI09177." evidence="8" ref="3">
    <original>P</original>
    <variation>S</variation>
    <location>
        <position position="456"/>
    </location>
</feature>
<feature type="sequence conflict" description="In Ref. 1; AAC43031 and 3; AAI09177." evidence="8" ref="1 3">
    <original>Q</original>
    <variation>R</variation>
    <location>
        <position position="542"/>
    </location>
</feature>
<feature type="sequence conflict" description="In Ref. 1; AAC43031 and 3; AAI09177." evidence="8" ref="1 3">
    <original>R</original>
    <variation>K</variation>
    <location>
        <position position="568"/>
    </location>
</feature>
<feature type="sequence conflict" description="In Ref. 1; AAC43031." evidence="8" ref="1">
    <original>V</original>
    <variation>L</variation>
    <location>
        <position position="689"/>
    </location>
</feature>
<reference key="1">
    <citation type="journal article" date="1998" name="J. Cell Biol.">
        <title>CDO, a robo-related cell surface protein that mediates myogenic differentiation.</title>
        <authorList>
            <person name="Kang J.-S."/>
            <person name="Mulieri P.J."/>
            <person name="Miller C."/>
            <person name="Sassoon D.A."/>
            <person name="Krauss R.S."/>
        </authorList>
    </citation>
    <scope>NUCLEOTIDE SEQUENCE [MRNA]</scope>
    <scope>FUNCTION</scope>
    <scope>INDUCTION</scope>
    <scope>TISSUE SPECIFICITY</scope>
    <source>
        <tissue>Embryo</tissue>
    </source>
</reference>
<reference key="2">
    <citation type="journal article" date="2009" name="PLoS Biol.">
        <title>Lineage-specific biology revealed by a finished genome assembly of the mouse.</title>
        <authorList>
            <person name="Church D.M."/>
            <person name="Goodstadt L."/>
            <person name="Hillier L.W."/>
            <person name="Zody M.C."/>
            <person name="Goldstein S."/>
            <person name="She X."/>
            <person name="Bult C.J."/>
            <person name="Agarwala R."/>
            <person name="Cherry J.L."/>
            <person name="DiCuccio M."/>
            <person name="Hlavina W."/>
            <person name="Kapustin Y."/>
            <person name="Meric P."/>
            <person name="Maglott D."/>
            <person name="Birtle Z."/>
            <person name="Marques A.C."/>
            <person name="Graves T."/>
            <person name="Zhou S."/>
            <person name="Teague B."/>
            <person name="Potamousis K."/>
            <person name="Churas C."/>
            <person name="Place M."/>
            <person name="Herschleb J."/>
            <person name="Runnheim R."/>
            <person name="Forrest D."/>
            <person name="Amos-Landgraf J."/>
            <person name="Schwartz D.C."/>
            <person name="Cheng Z."/>
            <person name="Lindblad-Toh K."/>
            <person name="Eichler E.E."/>
            <person name="Ponting C.P."/>
        </authorList>
    </citation>
    <scope>NUCLEOTIDE SEQUENCE [LARGE SCALE GENOMIC DNA]</scope>
    <source>
        <strain>C57BL/6J</strain>
    </source>
</reference>
<reference key="3">
    <citation type="journal article" date="2004" name="Genome Res.">
        <title>The status, quality, and expansion of the NIH full-length cDNA project: the Mammalian Gene Collection (MGC).</title>
        <authorList>
            <consortium name="The MGC Project Team"/>
        </authorList>
    </citation>
    <scope>NUCLEOTIDE SEQUENCE [LARGE SCALE MRNA]</scope>
</reference>
<reference key="4">
    <citation type="journal article" date="2004" name="J. Cell Biol.">
        <title>Netrins and neogenin promote myotube formation.</title>
        <authorList>
            <person name="Kang J.-S."/>
            <person name="Yi M.J."/>
            <person name="Zhang W."/>
            <person name="Feinleib J.L."/>
            <person name="Cole F."/>
            <person name="Krauss R.S."/>
        </authorList>
    </citation>
    <scope>IDENTIFICATION IN A COMPLEX WITH NEO1 AND CADHERINS</scope>
    <scope>FUNCTION</scope>
</reference>
<organism>
    <name type="scientific">Mus musculus</name>
    <name type="common">Mouse</name>
    <dbReference type="NCBI Taxonomy" id="10090"/>
    <lineage>
        <taxon>Eukaryota</taxon>
        <taxon>Metazoa</taxon>
        <taxon>Chordata</taxon>
        <taxon>Craniata</taxon>
        <taxon>Vertebrata</taxon>
        <taxon>Euteleostomi</taxon>
        <taxon>Mammalia</taxon>
        <taxon>Eutheria</taxon>
        <taxon>Euarchontoglires</taxon>
        <taxon>Glires</taxon>
        <taxon>Rodentia</taxon>
        <taxon>Myomorpha</taxon>
        <taxon>Muroidea</taxon>
        <taxon>Muridae</taxon>
        <taxon>Murinae</taxon>
        <taxon>Mus</taxon>
        <taxon>Mus</taxon>
    </lineage>
</organism>
<dbReference type="EMBL" id="AF090866">
    <property type="protein sequence ID" value="AAC43031.1"/>
    <property type="molecule type" value="mRNA"/>
</dbReference>
<dbReference type="EMBL" id="AC118232">
    <property type="status" value="NOT_ANNOTATED_CDS"/>
    <property type="molecule type" value="Genomic_DNA"/>
</dbReference>
<dbReference type="EMBL" id="AC159894">
    <property type="status" value="NOT_ANNOTATED_CDS"/>
    <property type="molecule type" value="Genomic_DNA"/>
</dbReference>
<dbReference type="EMBL" id="BC109176">
    <property type="protein sequence ID" value="AAI09177.1"/>
    <property type="molecule type" value="mRNA"/>
</dbReference>
<dbReference type="CCDS" id="CCDS22964.1"/>
<dbReference type="RefSeq" id="NP_001392175.1">
    <property type="nucleotide sequence ID" value="NM_001405246.1"/>
</dbReference>
<dbReference type="RefSeq" id="NP_001392176.1">
    <property type="nucleotide sequence ID" value="NM_001405247.1"/>
</dbReference>
<dbReference type="RefSeq" id="NP_001392177.1">
    <property type="nucleotide sequence ID" value="NM_001405248.1"/>
</dbReference>
<dbReference type="RefSeq" id="NP_001392178.1">
    <property type="nucleotide sequence ID" value="NM_001405249.1"/>
</dbReference>
<dbReference type="RefSeq" id="NP_001392179.1">
    <property type="nucleotide sequence ID" value="NM_001405250.1"/>
</dbReference>
<dbReference type="RefSeq" id="NP_001392180.1">
    <property type="nucleotide sequence ID" value="NM_001405251.1"/>
</dbReference>
<dbReference type="RefSeq" id="NP_067314.2">
    <property type="nucleotide sequence ID" value="NM_021339.3"/>
</dbReference>
<dbReference type="RefSeq" id="XP_006510570.1">
    <property type="nucleotide sequence ID" value="XM_006510507.3"/>
</dbReference>
<dbReference type="RefSeq" id="XP_006510571.1">
    <property type="nucleotide sequence ID" value="XM_006510508.3"/>
</dbReference>
<dbReference type="RefSeq" id="XP_006510572.1">
    <property type="nucleotide sequence ID" value="XM_006510509.3"/>
</dbReference>
<dbReference type="RefSeq" id="XP_006510573.1">
    <property type="nucleotide sequence ID" value="XM_006510510.3"/>
</dbReference>
<dbReference type="RefSeq" id="XP_006510574.1">
    <property type="nucleotide sequence ID" value="XM_006510511.3"/>
</dbReference>
<dbReference type="RefSeq" id="XP_011240883.1">
    <property type="nucleotide sequence ID" value="XM_011242581.2"/>
</dbReference>
<dbReference type="RefSeq" id="XP_036011047.1">
    <property type="nucleotide sequence ID" value="XM_036155154.1"/>
</dbReference>
<dbReference type="RefSeq" id="XP_036011048.1">
    <property type="nucleotide sequence ID" value="XM_036155155.1"/>
</dbReference>
<dbReference type="RefSeq" id="XP_036011049.1">
    <property type="nucleotide sequence ID" value="XM_036155156.1"/>
</dbReference>
<dbReference type="RefSeq" id="XP_036011050.1">
    <property type="nucleotide sequence ID" value="XM_036155157.1"/>
</dbReference>
<dbReference type="SMR" id="Q32MD9"/>
<dbReference type="BioGRID" id="208333">
    <property type="interactions" value="5"/>
</dbReference>
<dbReference type="CORUM" id="Q32MD9"/>
<dbReference type="DIP" id="DIP-57227N"/>
<dbReference type="FunCoup" id="Q32MD9">
    <property type="interactions" value="312"/>
</dbReference>
<dbReference type="IntAct" id="Q32MD9">
    <property type="interactions" value="7"/>
</dbReference>
<dbReference type="MINT" id="Q32MD9"/>
<dbReference type="STRING" id="10090.ENSMUSP00000113977"/>
<dbReference type="GlyCosmos" id="Q32MD9">
    <property type="glycosylation" value="8 sites, No reported glycans"/>
</dbReference>
<dbReference type="GlyGen" id="Q32MD9">
    <property type="glycosylation" value="9 sites, 2 N-linked glycans (2 sites)"/>
</dbReference>
<dbReference type="iPTMnet" id="Q32MD9"/>
<dbReference type="PhosphoSitePlus" id="Q32MD9"/>
<dbReference type="PaxDb" id="10090-ENSMUSP00000113977"/>
<dbReference type="PeptideAtlas" id="Q32MD9"/>
<dbReference type="ProteomicsDB" id="281443"/>
<dbReference type="Pumba" id="Q32MD9"/>
<dbReference type="Antibodypedia" id="2227">
    <property type="antibodies" value="200 antibodies from 30 providers"/>
</dbReference>
<dbReference type="DNASU" id="57810"/>
<dbReference type="Ensembl" id="ENSMUST00000042842.6">
    <property type="protein sequence ID" value="ENSMUSP00000045547.6"/>
    <property type="gene ID" value="ENSMUSG00000038119.16"/>
</dbReference>
<dbReference type="Ensembl" id="ENSMUST00000119129.10">
    <property type="protein sequence ID" value="ENSMUSP00000113977.2"/>
    <property type="gene ID" value="ENSMUSG00000038119.16"/>
</dbReference>
<dbReference type="GeneID" id="57810"/>
<dbReference type="KEGG" id="mmu:57810"/>
<dbReference type="UCSC" id="uc009ote.2">
    <property type="organism name" value="mouse"/>
</dbReference>
<dbReference type="AGR" id="MGI:1926387"/>
<dbReference type="CTD" id="50937"/>
<dbReference type="MGI" id="MGI:1926387">
    <property type="gene designation" value="Cdon"/>
</dbReference>
<dbReference type="VEuPathDB" id="HostDB:ENSMUSG00000038119"/>
<dbReference type="eggNOG" id="ENOG502QT4P">
    <property type="taxonomic scope" value="Eukaryota"/>
</dbReference>
<dbReference type="GeneTree" id="ENSGT00940000157114"/>
<dbReference type="HOGENOM" id="CLU_008503_0_0_1"/>
<dbReference type="InParanoid" id="Q32MD9"/>
<dbReference type="OMA" id="NGCAHLH"/>
<dbReference type="OrthoDB" id="9998697at2759"/>
<dbReference type="PhylomeDB" id="Q32MD9"/>
<dbReference type="TreeFam" id="TF332268"/>
<dbReference type="Reactome" id="R-MMU-525793">
    <property type="pathway name" value="Myogenesis"/>
</dbReference>
<dbReference type="Reactome" id="R-MMU-5632681">
    <property type="pathway name" value="Ligand-receptor interactions"/>
</dbReference>
<dbReference type="Reactome" id="R-MMU-5635838">
    <property type="pathway name" value="Activation of SMO"/>
</dbReference>
<dbReference type="BioGRID-ORCS" id="57810">
    <property type="hits" value="0 hits in 78 CRISPR screens"/>
</dbReference>
<dbReference type="ChiTaRS" id="Cdo1">
    <property type="organism name" value="mouse"/>
</dbReference>
<dbReference type="PRO" id="PR:Q32MD9"/>
<dbReference type="Proteomes" id="UP000000589">
    <property type="component" value="Chromosome 9"/>
</dbReference>
<dbReference type="RNAct" id="Q32MD9">
    <property type="molecule type" value="protein"/>
</dbReference>
<dbReference type="Bgee" id="ENSMUSG00000038119">
    <property type="expression patterns" value="Expressed in vestibular membrane of cochlear duct and 241 other cell types or tissues"/>
</dbReference>
<dbReference type="ExpressionAtlas" id="Q32MD9">
    <property type="expression patterns" value="baseline and differential"/>
</dbReference>
<dbReference type="GO" id="GO:0009986">
    <property type="term" value="C:cell surface"/>
    <property type="evidence" value="ECO:0000266"/>
    <property type="project" value="MGI"/>
</dbReference>
<dbReference type="GO" id="GO:0005886">
    <property type="term" value="C:plasma membrane"/>
    <property type="evidence" value="ECO:0000266"/>
    <property type="project" value="MGI"/>
</dbReference>
<dbReference type="GO" id="GO:0009952">
    <property type="term" value="P:anterior/posterior pattern specification"/>
    <property type="evidence" value="ECO:0000315"/>
    <property type="project" value="MGI"/>
</dbReference>
<dbReference type="GO" id="GO:0001708">
    <property type="term" value="P:cell fate specification"/>
    <property type="evidence" value="ECO:0000316"/>
    <property type="project" value="MGI"/>
</dbReference>
<dbReference type="GO" id="GO:0098609">
    <property type="term" value="P:cell-cell adhesion"/>
    <property type="evidence" value="ECO:0000304"/>
    <property type="project" value="UniProtKB"/>
</dbReference>
<dbReference type="GO" id="GO:0021953">
    <property type="term" value="P:central nervous system neuron differentiation"/>
    <property type="evidence" value="ECO:0000315"/>
    <property type="project" value="MGI"/>
</dbReference>
<dbReference type="GO" id="GO:0021987">
    <property type="term" value="P:cerebral cortex development"/>
    <property type="evidence" value="ECO:0000315"/>
    <property type="project" value="MGI"/>
</dbReference>
<dbReference type="GO" id="GO:0010172">
    <property type="term" value="P:embryonic body morphogenesis"/>
    <property type="evidence" value="ECO:0000315"/>
    <property type="project" value="MGI"/>
</dbReference>
<dbReference type="GO" id="GO:0048598">
    <property type="term" value="P:embryonic morphogenesis"/>
    <property type="evidence" value="ECO:0000316"/>
    <property type="project" value="MGI"/>
</dbReference>
<dbReference type="GO" id="GO:0060059">
    <property type="term" value="P:embryonic retina morphogenesis in camera-type eye"/>
    <property type="evidence" value="ECO:0000315"/>
    <property type="project" value="MGI"/>
</dbReference>
<dbReference type="GO" id="GO:0002088">
    <property type="term" value="P:lens development in camera-type eye"/>
    <property type="evidence" value="ECO:0000315"/>
    <property type="project" value="MGI"/>
</dbReference>
<dbReference type="GO" id="GO:0007520">
    <property type="term" value="P:myoblast fusion"/>
    <property type="evidence" value="ECO:0000315"/>
    <property type="project" value="MGI"/>
</dbReference>
<dbReference type="GO" id="GO:0061351">
    <property type="term" value="P:neural precursor cell proliferation"/>
    <property type="evidence" value="ECO:0000315"/>
    <property type="project" value="MGI"/>
</dbReference>
<dbReference type="GO" id="GO:0007405">
    <property type="term" value="P:neuroblast proliferation"/>
    <property type="evidence" value="ECO:0000315"/>
    <property type="project" value="MGI"/>
</dbReference>
<dbReference type="GO" id="GO:0030182">
    <property type="term" value="P:neuron differentiation"/>
    <property type="evidence" value="ECO:0000315"/>
    <property type="project" value="MGI"/>
</dbReference>
<dbReference type="GO" id="GO:0043410">
    <property type="term" value="P:positive regulation of MAPK cascade"/>
    <property type="evidence" value="ECO:0000315"/>
    <property type="project" value="MGI"/>
</dbReference>
<dbReference type="GO" id="GO:0045663">
    <property type="term" value="P:positive regulation of myoblast differentiation"/>
    <property type="evidence" value="ECO:0000304"/>
    <property type="project" value="UniProtKB"/>
</dbReference>
<dbReference type="GO" id="GO:0002052">
    <property type="term" value="P:positive regulation of neuroblast proliferation"/>
    <property type="evidence" value="ECO:0000315"/>
    <property type="project" value="MGI"/>
</dbReference>
<dbReference type="GO" id="GO:0045666">
    <property type="term" value="P:positive regulation of neuron differentiation"/>
    <property type="evidence" value="ECO:0000314"/>
    <property type="project" value="MGI"/>
</dbReference>
<dbReference type="GO" id="GO:0048643">
    <property type="term" value="P:positive regulation of skeletal muscle tissue development"/>
    <property type="evidence" value="ECO:0000315"/>
    <property type="project" value="MGI"/>
</dbReference>
<dbReference type="GO" id="GO:0051057">
    <property type="term" value="P:positive regulation of small GTPase mediated signal transduction"/>
    <property type="evidence" value="ECO:0000315"/>
    <property type="project" value="MGI"/>
</dbReference>
<dbReference type="GO" id="GO:0045944">
    <property type="term" value="P:positive regulation of transcription by RNA polymerase II"/>
    <property type="evidence" value="ECO:0000316"/>
    <property type="project" value="MGI"/>
</dbReference>
<dbReference type="GO" id="GO:0045664">
    <property type="term" value="P:regulation of neuron differentiation"/>
    <property type="evidence" value="ECO:0000315"/>
    <property type="project" value="MGI"/>
</dbReference>
<dbReference type="GO" id="GO:0016202">
    <property type="term" value="P:regulation of striated muscle tissue development"/>
    <property type="evidence" value="ECO:0000266"/>
    <property type="project" value="MGI"/>
</dbReference>
<dbReference type="GO" id="GO:0014816">
    <property type="term" value="P:skeletal muscle satellite cell differentiation"/>
    <property type="evidence" value="ECO:0000315"/>
    <property type="project" value="MGI"/>
</dbReference>
<dbReference type="GO" id="GO:0007519">
    <property type="term" value="P:skeletal muscle tissue development"/>
    <property type="evidence" value="ECO:0000315"/>
    <property type="project" value="MGI"/>
</dbReference>
<dbReference type="GO" id="GO:0007224">
    <property type="term" value="P:smoothened signaling pathway"/>
    <property type="evidence" value="ECO:0000316"/>
    <property type="project" value="MGI"/>
</dbReference>
<dbReference type="GO" id="GO:0051146">
    <property type="term" value="P:striated muscle cell differentiation"/>
    <property type="evidence" value="ECO:0000316"/>
    <property type="project" value="MGI"/>
</dbReference>
<dbReference type="CDD" id="cd00063">
    <property type="entry name" value="FN3"/>
    <property type="match status" value="3"/>
</dbReference>
<dbReference type="CDD" id="cd00096">
    <property type="entry name" value="Ig"/>
    <property type="match status" value="1"/>
</dbReference>
<dbReference type="FunFam" id="2.60.40.10:FF:000205">
    <property type="entry name" value="Cell adhesion associated, oncogene regulated"/>
    <property type="match status" value="1"/>
</dbReference>
<dbReference type="FunFam" id="2.60.40.10:FF:000327">
    <property type="entry name" value="Cell adhesion associated, oncogene regulated"/>
    <property type="match status" value="1"/>
</dbReference>
<dbReference type="FunFam" id="2.60.40.10:FF:000352">
    <property type="entry name" value="Cell adhesion molecule-related/down-regulated by oncogenes"/>
    <property type="match status" value="1"/>
</dbReference>
<dbReference type="FunFam" id="2.60.40.10:FF:001305">
    <property type="entry name" value="Cell adhesion molecule-related/down-regulated by oncogenes"/>
    <property type="match status" value="1"/>
</dbReference>
<dbReference type="FunFam" id="2.60.40.10:FF:000273">
    <property type="entry name" value="contactin-3 isoform X1"/>
    <property type="match status" value="1"/>
</dbReference>
<dbReference type="FunFam" id="2.60.40.10:FF:000032">
    <property type="entry name" value="palladin isoform X1"/>
    <property type="match status" value="1"/>
</dbReference>
<dbReference type="Gene3D" id="2.60.40.10">
    <property type="entry name" value="Immunoglobulins"/>
    <property type="match status" value="8"/>
</dbReference>
<dbReference type="InterPro" id="IPR003961">
    <property type="entry name" value="FN3_dom"/>
</dbReference>
<dbReference type="InterPro" id="IPR036116">
    <property type="entry name" value="FN3_sf"/>
</dbReference>
<dbReference type="InterPro" id="IPR007110">
    <property type="entry name" value="Ig-like_dom"/>
</dbReference>
<dbReference type="InterPro" id="IPR036179">
    <property type="entry name" value="Ig-like_dom_sf"/>
</dbReference>
<dbReference type="InterPro" id="IPR013783">
    <property type="entry name" value="Ig-like_fold"/>
</dbReference>
<dbReference type="InterPro" id="IPR013098">
    <property type="entry name" value="Ig_I-set"/>
</dbReference>
<dbReference type="InterPro" id="IPR003599">
    <property type="entry name" value="Ig_sub"/>
</dbReference>
<dbReference type="InterPro" id="IPR003598">
    <property type="entry name" value="Ig_sub2"/>
</dbReference>
<dbReference type="PANTHER" id="PTHR44170:SF1">
    <property type="entry name" value="CELL ADHESION MOLECULE-RELATED_DOWN-REGULATED BY ONCOGENES"/>
    <property type="match status" value="1"/>
</dbReference>
<dbReference type="PANTHER" id="PTHR44170">
    <property type="entry name" value="PROTEIN SIDEKICK"/>
    <property type="match status" value="1"/>
</dbReference>
<dbReference type="Pfam" id="PF00041">
    <property type="entry name" value="fn3"/>
    <property type="match status" value="3"/>
</dbReference>
<dbReference type="Pfam" id="PF07679">
    <property type="entry name" value="I-set"/>
    <property type="match status" value="1"/>
</dbReference>
<dbReference type="Pfam" id="PF13927">
    <property type="entry name" value="Ig_3"/>
    <property type="match status" value="3"/>
</dbReference>
<dbReference type="SMART" id="SM00060">
    <property type="entry name" value="FN3"/>
    <property type="match status" value="3"/>
</dbReference>
<dbReference type="SMART" id="SM00409">
    <property type="entry name" value="IG"/>
    <property type="match status" value="5"/>
</dbReference>
<dbReference type="SMART" id="SM00408">
    <property type="entry name" value="IGc2"/>
    <property type="match status" value="5"/>
</dbReference>
<dbReference type="SUPFAM" id="SSF49265">
    <property type="entry name" value="Fibronectin type III"/>
    <property type="match status" value="2"/>
</dbReference>
<dbReference type="SUPFAM" id="SSF48726">
    <property type="entry name" value="Immunoglobulin"/>
    <property type="match status" value="5"/>
</dbReference>
<dbReference type="PROSITE" id="PS50853">
    <property type="entry name" value="FN3"/>
    <property type="match status" value="3"/>
</dbReference>
<dbReference type="PROSITE" id="PS50835">
    <property type="entry name" value="IG_LIKE"/>
    <property type="match status" value="5"/>
</dbReference>
<sequence>MHPDLGPLWTLLYVLVILCSSVSSDLAPYFISEPLSAVQKLGRPVVLHCSAKPVTARISWLHNGKRLDRNTEQIKIHRGTLTILSLNPSLSGCYQCVANNSVGAVVSGPATVSAAALGDFDSSTMHVITAEEKNTGFIGCRVPESNPKAEVRYKIRGKWLKHSTGNYIILPSGNLQVLNVSSKDKGSYKCAAYNPVTSELKVEPTGRKLLVSRPSSNGFHILHPALSQALAVLPHSPVTLECVVSGVPASQVYWLKDGQDAVAGSNWRRLYSHLATASIDPADSGNYSCVVGNKSGDVKHVTYMVNVLEHASISKGLHDQKVSLGATVHFTCDVHGNPAPNRTWFHNAQPIHPSSRHLTEGNVLKITRVVMEDSGLYQCVADNGIGFMQSTGRLQIEQDSGWKPVIVTAPANIEVMDGDFVTLSCNATGVPVPVIHWYGRHGLITSHPSQVLRSKPRKSHLFRPGDLDLEPVYLIMSQAGSSSLSIQAVTLEHAGKYTCEATNKHGSTQSEAFLTVVPFETNTKAESVTPSEASQNDERDPQDGSESSLLNLFPVKVHPSGVELPAERNASVPDAPNILSPPQTHMPDTYNLVWRAGRDGGMPINAYFVKYRKLDDGSGAVGSWHTVRVPGSENELHLTELEPSSLYEVLMVARSAVGEGQPAMLTFRTSKEKMASSKNTQASFPPVGVPKRPVTAEASNSNFGVVLTDSSRHSGVPEAPDRPTISMASETSVYVTWIPRANGGSPITAFKVEYKRMRTSDWLVAAEDIPPSKLSVEVRSLEPGSIYKFRVIAINHYGESFRSSASRPYQVAGFPNRFSNRPITGPHIAYTEAVSDTQIMLKWTYVPSSNNNTPIQGFYIYYRPTDSDNDSDYKRDVVEGSKQWHTIGHLQPETSYDIKMQCFNEGGESEFSNVMICETKVKRVPGASDYPVKELSTPPSSSGNAGNVGPATSPARSSDMLYLIVGCVLGVMVLILMVFIALCLWKSRQQSTIQKYDPPGYLYQGSEINGQMVEYTTLSGAARINGSVHGGFLSNGCSHLHHKGPSGVNGTLSGNINGGLYSAHTNSLTRACVEFEHPHHLVNSGGVYTAVPQMDPLECINCRNCRNNNRCFTKTNSPLPVVPVVASYPQGGLEMKPLNAMKVPVCPASTVPDHGQLPDDCVKDSVAPIPTQHTCCQDNISDINSDSTEDTAEFSRGDSSGHSEAEDKVFSWNPLILSPVLEDCGEKTARSPPGPPLDGLSVVLQQAQET</sequence>
<proteinExistence type="evidence at protein level"/>
<protein>
    <recommendedName>
        <fullName>Cell adhesion molecule-related/down-regulated by oncogenes</fullName>
    </recommendedName>
</protein>
<evidence type="ECO:0000250" key="1"/>
<evidence type="ECO:0000255" key="2"/>
<evidence type="ECO:0000255" key="3">
    <source>
        <dbReference type="PROSITE-ProRule" id="PRU00114"/>
    </source>
</evidence>
<evidence type="ECO:0000255" key="4">
    <source>
        <dbReference type="PROSITE-ProRule" id="PRU00316"/>
    </source>
</evidence>
<evidence type="ECO:0000256" key="5">
    <source>
        <dbReference type="SAM" id="MobiDB-lite"/>
    </source>
</evidence>
<evidence type="ECO:0000269" key="6">
    <source>
    </source>
</evidence>
<evidence type="ECO:0000269" key="7">
    <source>
    </source>
</evidence>
<evidence type="ECO:0000305" key="8"/>
<gene>
    <name type="primary">Cdon</name>
    <name type="synonym">Cdo</name>
</gene>
<keyword id="KW-1003">Cell membrane</keyword>
<keyword id="KW-1015">Disulfide bond</keyword>
<keyword id="KW-0325">Glycoprotein</keyword>
<keyword id="KW-0393">Immunoglobulin domain</keyword>
<keyword id="KW-0472">Membrane</keyword>
<keyword id="KW-1185">Reference proteome</keyword>
<keyword id="KW-0677">Repeat</keyword>
<keyword id="KW-0732">Signal</keyword>
<keyword id="KW-0812">Transmembrane</keyword>
<keyword id="KW-1133">Transmembrane helix</keyword>
<name>CDON_MOUSE</name>